<evidence type="ECO:0000250" key="1"/>
<evidence type="ECO:0000255" key="2"/>
<evidence type="ECO:0000255" key="3">
    <source>
        <dbReference type="PROSITE-ProRule" id="PRU00031"/>
    </source>
</evidence>
<evidence type="ECO:0000255" key="4">
    <source>
        <dbReference type="PROSITE-ProRule" id="PRU00210"/>
    </source>
</evidence>
<evidence type="ECO:0000255" key="5">
    <source>
        <dbReference type="PROSITE-ProRule" id="PRU00233"/>
    </source>
</evidence>
<evidence type="ECO:0000256" key="6">
    <source>
        <dbReference type="SAM" id="MobiDB-lite"/>
    </source>
</evidence>
<evidence type="ECO:0000305" key="7"/>
<proteinExistence type="evidence at transcript level"/>
<dbReference type="EMBL" id="AF314171">
    <property type="protein sequence ID" value="AAG41980.1"/>
    <property type="molecule type" value="mRNA"/>
</dbReference>
<dbReference type="EMBL" id="BC005747">
    <property type="protein sequence ID" value="AAH05747.1"/>
    <property type="molecule type" value="mRNA"/>
</dbReference>
<dbReference type="EMBL" id="BC132475">
    <property type="protein sequence ID" value="AAI32476.1"/>
    <property type="molecule type" value="mRNA"/>
</dbReference>
<dbReference type="EMBL" id="BC137854">
    <property type="protein sequence ID" value="AAI37855.1"/>
    <property type="molecule type" value="mRNA"/>
</dbReference>
<dbReference type="CCDS" id="CCDS26031.1"/>
<dbReference type="RefSeq" id="NP_570957.2">
    <property type="nucleotide sequence ID" value="NM_130887.3"/>
</dbReference>
<dbReference type="RefSeq" id="XP_036013095.1">
    <property type="nucleotide sequence ID" value="XM_036157202.1"/>
</dbReference>
<dbReference type="SMR" id="Q9EPX2"/>
<dbReference type="BioGRID" id="228393">
    <property type="interactions" value="1"/>
</dbReference>
<dbReference type="FunCoup" id="Q9EPX2">
    <property type="interactions" value="57"/>
</dbReference>
<dbReference type="IntAct" id="Q9EPX2">
    <property type="interactions" value="1"/>
</dbReference>
<dbReference type="STRING" id="10090.ENSMUSP00000113806"/>
<dbReference type="MEROPS" id="I02.972"/>
<dbReference type="GlyGen" id="Q9EPX2">
    <property type="glycosylation" value="3 sites, 1 N-linked glycan (1 site)"/>
</dbReference>
<dbReference type="iPTMnet" id="Q9EPX2"/>
<dbReference type="PhosphoSitePlus" id="Q9EPX2"/>
<dbReference type="CPTAC" id="non-CPTAC-3604"/>
<dbReference type="PaxDb" id="10090-ENSMUSP00000021646"/>
<dbReference type="ProteomicsDB" id="291787"/>
<dbReference type="Antibodypedia" id="63258">
    <property type="antibodies" value="113 antibodies from 15 providers"/>
</dbReference>
<dbReference type="DNASU" id="170721"/>
<dbReference type="Ensembl" id="ENSMUST00000021646.6">
    <property type="protein sequence ID" value="ENSMUSP00000021646.6"/>
    <property type="gene ID" value="ENSMUSG00000021223.14"/>
</dbReference>
<dbReference type="GeneID" id="170721"/>
<dbReference type="KEGG" id="mmu:170721"/>
<dbReference type="UCSC" id="uc007odr.3">
    <property type="organism name" value="mouse"/>
</dbReference>
<dbReference type="AGR" id="MGI:2386139"/>
<dbReference type="CTD" id="89932"/>
<dbReference type="MGI" id="MGI:2386139">
    <property type="gene designation" value="Papln"/>
</dbReference>
<dbReference type="VEuPathDB" id="HostDB:ENSMUSG00000021223"/>
<dbReference type="eggNOG" id="KOG3510">
    <property type="taxonomic scope" value="Eukaryota"/>
</dbReference>
<dbReference type="eggNOG" id="KOG4597">
    <property type="taxonomic scope" value="Eukaryota"/>
</dbReference>
<dbReference type="GeneTree" id="ENSGT00940000156891"/>
<dbReference type="HOGENOM" id="CLU_000660_7_0_1"/>
<dbReference type="InParanoid" id="Q9EPX2"/>
<dbReference type="OrthoDB" id="9948486at2759"/>
<dbReference type="TreeFam" id="TF316874"/>
<dbReference type="BioGRID-ORCS" id="170721">
    <property type="hits" value="0 hits in 75 CRISPR screens"/>
</dbReference>
<dbReference type="ChiTaRS" id="Papln">
    <property type="organism name" value="mouse"/>
</dbReference>
<dbReference type="PRO" id="PR:Q9EPX2"/>
<dbReference type="Proteomes" id="UP000000589">
    <property type="component" value="Chromosome 12"/>
</dbReference>
<dbReference type="RNAct" id="Q9EPX2">
    <property type="molecule type" value="protein"/>
</dbReference>
<dbReference type="Bgee" id="ENSMUSG00000021223">
    <property type="expression patterns" value="Expressed in molar tooth and 38 other cell types or tissues"/>
</dbReference>
<dbReference type="ExpressionAtlas" id="Q9EPX2">
    <property type="expression patterns" value="baseline and differential"/>
</dbReference>
<dbReference type="GO" id="GO:0005604">
    <property type="term" value="C:basement membrane"/>
    <property type="evidence" value="ECO:0000314"/>
    <property type="project" value="MGI"/>
</dbReference>
<dbReference type="GO" id="GO:0062023">
    <property type="term" value="C:collagen-containing extracellular matrix"/>
    <property type="evidence" value="ECO:0007005"/>
    <property type="project" value="BHF-UCL"/>
</dbReference>
<dbReference type="GO" id="GO:0005576">
    <property type="term" value="C:extracellular region"/>
    <property type="evidence" value="ECO:0007669"/>
    <property type="project" value="UniProtKB-SubCell"/>
</dbReference>
<dbReference type="GO" id="GO:0004867">
    <property type="term" value="F:serine-type endopeptidase inhibitor activity"/>
    <property type="evidence" value="ECO:0007669"/>
    <property type="project" value="UniProtKB-KW"/>
</dbReference>
<dbReference type="GO" id="GO:0030198">
    <property type="term" value="P:extracellular matrix organization"/>
    <property type="evidence" value="ECO:0007669"/>
    <property type="project" value="InterPro"/>
</dbReference>
<dbReference type="CDD" id="cd22635">
    <property type="entry name" value="Kunitz_papilin"/>
    <property type="match status" value="1"/>
</dbReference>
<dbReference type="FunFam" id="2.60.120.830:FF:000001">
    <property type="entry name" value="A disintegrin and metalloproteinase with thrombospondin motifs 1"/>
    <property type="match status" value="1"/>
</dbReference>
<dbReference type="FunFam" id="2.20.100.10:FF:000005">
    <property type="entry name" value="ADAM metallopeptidase with thrombospondin type 1 motif 9"/>
    <property type="match status" value="2"/>
</dbReference>
<dbReference type="FunFam" id="2.20.100.10:FF:000009">
    <property type="entry name" value="ADAMTS-like protein 3 isoform A"/>
    <property type="match status" value="1"/>
</dbReference>
<dbReference type="FunFam" id="2.60.40.10:FF:002371">
    <property type="entry name" value="Papilin"/>
    <property type="match status" value="2"/>
</dbReference>
<dbReference type="FunFam" id="4.10.410.10:FF:000017">
    <property type="entry name" value="papilin isoform X2"/>
    <property type="match status" value="1"/>
</dbReference>
<dbReference type="Gene3D" id="2.60.120.830">
    <property type="match status" value="1"/>
</dbReference>
<dbReference type="Gene3D" id="2.60.40.10">
    <property type="entry name" value="Immunoglobulins"/>
    <property type="match status" value="3"/>
</dbReference>
<dbReference type="Gene3D" id="4.10.410.10">
    <property type="entry name" value="Pancreatic trypsin inhibitor Kunitz domain"/>
    <property type="match status" value="1"/>
</dbReference>
<dbReference type="Gene3D" id="2.20.100.10">
    <property type="entry name" value="Thrombospondin type-1 (TSP1) repeat"/>
    <property type="match status" value="5"/>
</dbReference>
<dbReference type="InterPro" id="IPR013273">
    <property type="entry name" value="ADAMTS/ADAMTS-like"/>
</dbReference>
<dbReference type="InterPro" id="IPR050439">
    <property type="entry name" value="ADAMTS_ADAMTS-like"/>
</dbReference>
<dbReference type="InterPro" id="IPR045371">
    <property type="entry name" value="ADAMTS_CR_3"/>
</dbReference>
<dbReference type="InterPro" id="IPR010294">
    <property type="entry name" value="ADAMTS_spacer1"/>
</dbReference>
<dbReference type="InterPro" id="IPR007110">
    <property type="entry name" value="Ig-like_dom"/>
</dbReference>
<dbReference type="InterPro" id="IPR036179">
    <property type="entry name" value="Ig-like_dom_sf"/>
</dbReference>
<dbReference type="InterPro" id="IPR013783">
    <property type="entry name" value="Ig-like_fold"/>
</dbReference>
<dbReference type="InterPro" id="IPR013098">
    <property type="entry name" value="Ig_I-set"/>
</dbReference>
<dbReference type="InterPro" id="IPR003599">
    <property type="entry name" value="Ig_sub"/>
</dbReference>
<dbReference type="InterPro" id="IPR003598">
    <property type="entry name" value="Ig_sub2"/>
</dbReference>
<dbReference type="InterPro" id="IPR013106">
    <property type="entry name" value="Ig_V-set"/>
</dbReference>
<dbReference type="InterPro" id="IPR002223">
    <property type="entry name" value="Kunitz_BPTI"/>
</dbReference>
<dbReference type="InterPro" id="IPR036880">
    <property type="entry name" value="Kunitz_BPTI_sf"/>
</dbReference>
<dbReference type="InterPro" id="IPR010909">
    <property type="entry name" value="PLAC"/>
</dbReference>
<dbReference type="InterPro" id="IPR020901">
    <property type="entry name" value="Prtase_inh_Kunz-CS"/>
</dbReference>
<dbReference type="InterPro" id="IPR000884">
    <property type="entry name" value="TSP1_rpt"/>
</dbReference>
<dbReference type="InterPro" id="IPR036383">
    <property type="entry name" value="TSP1_rpt_sf"/>
</dbReference>
<dbReference type="PANTHER" id="PTHR13723">
    <property type="entry name" value="ADAMTS A DISINTEGRIN AND METALLOPROTEASE WITH THROMBOSPONDIN MOTIFS PROTEASE"/>
    <property type="match status" value="1"/>
</dbReference>
<dbReference type="PANTHER" id="PTHR13723:SF281">
    <property type="entry name" value="PAPILIN"/>
    <property type="match status" value="1"/>
</dbReference>
<dbReference type="Pfam" id="PF19236">
    <property type="entry name" value="ADAMTS_CR_3"/>
    <property type="match status" value="1"/>
</dbReference>
<dbReference type="Pfam" id="PF05986">
    <property type="entry name" value="ADAMTS_spacer1"/>
    <property type="match status" value="1"/>
</dbReference>
<dbReference type="Pfam" id="PF07679">
    <property type="entry name" value="I-set"/>
    <property type="match status" value="2"/>
</dbReference>
<dbReference type="Pfam" id="PF13927">
    <property type="entry name" value="Ig_3"/>
    <property type="match status" value="1"/>
</dbReference>
<dbReference type="Pfam" id="PF00014">
    <property type="entry name" value="Kunitz_BPTI"/>
    <property type="match status" value="1"/>
</dbReference>
<dbReference type="Pfam" id="PF16626">
    <property type="entry name" value="Papilin_u7"/>
    <property type="match status" value="1"/>
</dbReference>
<dbReference type="Pfam" id="PF08686">
    <property type="entry name" value="PLAC"/>
    <property type="match status" value="1"/>
</dbReference>
<dbReference type="Pfam" id="PF19030">
    <property type="entry name" value="TSP1_ADAMTS"/>
    <property type="match status" value="4"/>
</dbReference>
<dbReference type="Pfam" id="PF00090">
    <property type="entry name" value="TSP_1"/>
    <property type="match status" value="1"/>
</dbReference>
<dbReference type="PRINTS" id="PR01857">
    <property type="entry name" value="ADAMTSFAMILY"/>
</dbReference>
<dbReference type="PRINTS" id="PR00759">
    <property type="entry name" value="BASICPTASE"/>
</dbReference>
<dbReference type="SMART" id="SM00409">
    <property type="entry name" value="IG"/>
    <property type="match status" value="3"/>
</dbReference>
<dbReference type="SMART" id="SM00408">
    <property type="entry name" value="IGc2"/>
    <property type="match status" value="3"/>
</dbReference>
<dbReference type="SMART" id="SM00406">
    <property type="entry name" value="IGv"/>
    <property type="match status" value="3"/>
</dbReference>
<dbReference type="SMART" id="SM00131">
    <property type="entry name" value="KU"/>
    <property type="match status" value="1"/>
</dbReference>
<dbReference type="SMART" id="SM00209">
    <property type="entry name" value="TSP1"/>
    <property type="match status" value="5"/>
</dbReference>
<dbReference type="SUPFAM" id="SSF57362">
    <property type="entry name" value="BPTI-like"/>
    <property type="match status" value="1"/>
</dbReference>
<dbReference type="SUPFAM" id="SSF48726">
    <property type="entry name" value="Immunoglobulin"/>
    <property type="match status" value="3"/>
</dbReference>
<dbReference type="SUPFAM" id="SSF82895">
    <property type="entry name" value="TSP-1 type 1 repeat"/>
    <property type="match status" value="5"/>
</dbReference>
<dbReference type="PROSITE" id="PS00280">
    <property type="entry name" value="BPTI_KUNITZ_1"/>
    <property type="match status" value="1"/>
</dbReference>
<dbReference type="PROSITE" id="PS50279">
    <property type="entry name" value="BPTI_KUNITZ_2"/>
    <property type="match status" value="1"/>
</dbReference>
<dbReference type="PROSITE" id="PS50835">
    <property type="entry name" value="IG_LIKE"/>
    <property type="match status" value="3"/>
</dbReference>
<dbReference type="PROSITE" id="PS50900">
    <property type="entry name" value="PLAC"/>
    <property type="match status" value="1"/>
</dbReference>
<dbReference type="PROSITE" id="PS50092">
    <property type="entry name" value="TSP1"/>
    <property type="match status" value="5"/>
</dbReference>
<name>PPN_MOUSE</name>
<reference key="1">
    <citation type="journal article" date="2000" name="Development">
        <title>Papilin in development; a pericellular protein with a homology to the ADAMTS metalloproteinases.</title>
        <authorList>
            <person name="Kramerova I.A."/>
            <person name="Kawaguchi N."/>
            <person name="Fessler L.I."/>
            <person name="Nelson R.E."/>
            <person name="Chen Y."/>
            <person name="Kramerov A.A."/>
            <person name="Kusche-Gullberg M."/>
            <person name="Kramer J.M."/>
            <person name="Ackley B.D."/>
            <person name="Sieron A.L."/>
            <person name="Prockop D.J."/>
            <person name="Fessler J.H."/>
        </authorList>
    </citation>
    <scope>NUCLEOTIDE SEQUENCE [MRNA]</scope>
    <source>
        <strain>CD-1</strain>
    </source>
</reference>
<reference key="2">
    <citation type="journal article" date="2004" name="Genome Res.">
        <title>The status, quality, and expansion of the NIH full-length cDNA project: the Mammalian Gene Collection (MGC).</title>
        <authorList>
            <consortium name="The MGC Project Team"/>
        </authorList>
    </citation>
    <scope>NUCLEOTIDE SEQUENCE [LARGE SCALE MRNA]</scope>
    <source>
        <strain>Czech II</strain>
        <tissue>Brain</tissue>
        <tissue>Mammary tumor</tissue>
    </source>
</reference>
<sequence length="1280" mass="138904">MQLFPLLFSLLLTSTPGSWARNVRRQSDTWGTWGEWSPCSRTCGGGISFRERPCYSQRRDGGTSCVGPARSHRTCHTESCPDGVRDFRAEQCAEFDGTDFQGRRYRWLPYYAAPNKCELNCIPKGQNFYYKHKDAVVDGTPCEPGQRDICVDGVCRVVGCDHKLDSIKQEDKCLQCGGDGSSCYPVTGTFDGNDLSRGYNQIFIIPAGATSIRIEEAAASRNFLAVKSIRGEYYLNGHWTIEAAQALPVASTVLQYERGVEGDLAPERLQARGPTSEPLVIELLSQESNPGVHYEYYLPANDPGRGFSWSHGSWGDCSAECGGGHQSRLVFCTIDNEAYPDHMCQHQPRPTHRRSCNTQPCPKTKRWKVGPWTPCSVSCGGGVQSRSVYCISSDGTGGQEAAEETQCAGLVGKPPTTQACNLQHCAVWSVEPWGECSVTCGTGIRKRSVTCRGDEGSPVHAAACLLKDQPTLTEPCVQEACPVFRGQAWHVGSWSLCSKSCGSGIRRRQVVCTIGPPGRCVDLQSSKPAEMEACNRQPCHLPQEVPSIQDPRTRSSDPRMLSGPRVSPVSDGREQQWAPLERPRAQSNPREGQDPNLSSAGRAPTLQRPPHQPPLRPSSGPRDCRHSPHGCCPDGHTPSLGPQWQGCPLAGASCLQSRYGCCPDGVSAAEGPQQAGCTRSHGSDNTGNRPGSRAVASKNPKIHQPQAHEGEPSECRSSRFGCCYDNVASAAGPLGEGCVGQPSYAYPVRCLLPSAQGSCGDWAARWYFVASVGRCNRFWYGGCHGNANNFASEQECMNTCRGQHGPRRPEAGAAGHRAHVDGGQRGPGGQQEPDWHRAGATIPRLPSPSGSPWRREQEPAPGEPPHIPAYGNRPGGQEIRPRVPGLDREARPAVPPTHSPSYRIRLAGSEPSLVQAAPGQAVQLFCPGNIPSEFQAGWQKEGRPISSNRYQLQADGSLIISRLRPEDAGIYSCGSHRPGHEPQEIQLRVTGGDMAVFPEGQPRHFPEPRNPDLGHGPPHRGTGAEAGGHRVLSPSHPRPATRLRLDRTQPGVVDASPGQRIRLTCRAEGFPVPTIEWQRDGQLVSSPRHQVQPDGSLVISRVDVEDGGYYSCVAFNGQDRDQRWVQLRVLRELTITGLPPAVTVAEGDTARLLCVVAGESVNIRWSRNGLPIQADGHRVHQSPDGTLLIHNLRPRDEGSYTCSAFRGSQAVSRSTEVKVALPAPAAQSRDLGKDCIDQPELANCALILQAQLCGNEYYSSFCCASCSRFQPNAQPVWQQG</sequence>
<comment type="subcellular location">
    <subcellularLocation>
        <location evidence="7">Secreted</location>
    </subcellularLocation>
</comment>
<comment type="similarity">
    <text evidence="7">Belongs to the papilin family.</text>
</comment>
<protein>
    <recommendedName>
        <fullName>Papilin</fullName>
    </recommendedName>
</protein>
<accession>Q9EPX2</accession>
<accession>A2RTE8</accession>
<accession>B2RQC4</accession>
<accession>Q99JQ8</accession>
<feature type="signal peptide" evidence="2">
    <location>
        <begin position="1"/>
        <end position="20"/>
    </location>
</feature>
<feature type="chain" id="PRO_0000324551" description="Papilin">
    <location>
        <begin position="21"/>
        <end position="1280"/>
    </location>
</feature>
<feature type="domain" description="TSP type-1 1" evidence="4">
    <location>
        <begin position="27"/>
        <end position="81"/>
    </location>
</feature>
<feature type="domain" description="TSP type-1 2" evidence="4">
    <location>
        <begin position="305"/>
        <end position="362"/>
    </location>
</feature>
<feature type="domain" description="TSP type-1 3" evidence="4">
    <location>
        <begin position="363"/>
        <end position="422"/>
    </location>
</feature>
<feature type="domain" description="TSP type-1 4" evidence="4">
    <location>
        <begin position="424"/>
        <end position="482"/>
    </location>
</feature>
<feature type="domain" description="TSP type-1 5" evidence="4">
    <location>
        <begin position="485"/>
        <end position="540"/>
    </location>
</feature>
<feature type="domain" description="BPTI/Kunitz inhibitor" evidence="3">
    <location>
        <begin position="750"/>
        <end position="800"/>
    </location>
</feature>
<feature type="domain" description="Ig-like C2-type 1">
    <location>
        <begin position="900"/>
        <end position="990"/>
    </location>
</feature>
<feature type="domain" description="Ig-like C2-type 2">
    <location>
        <begin position="1039"/>
        <end position="1128"/>
    </location>
</feature>
<feature type="domain" description="Ig-like C2-type 3">
    <location>
        <begin position="1133"/>
        <end position="1218"/>
    </location>
</feature>
<feature type="domain" description="PLAC" evidence="5">
    <location>
        <begin position="1231"/>
        <end position="1270"/>
    </location>
</feature>
<feature type="region of interest" description="Disordered" evidence="6">
    <location>
        <begin position="541"/>
        <end position="626"/>
    </location>
</feature>
<feature type="region of interest" description="Disordered" evidence="6">
    <location>
        <begin position="672"/>
        <end position="715"/>
    </location>
</feature>
<feature type="region of interest" description="Disordered" evidence="6">
    <location>
        <begin position="800"/>
        <end position="902"/>
    </location>
</feature>
<feature type="region of interest" description="Disordered" evidence="6">
    <location>
        <begin position="1002"/>
        <end position="1042"/>
    </location>
</feature>
<feature type="compositionally biased region" description="Polar residues" evidence="6">
    <location>
        <begin position="585"/>
        <end position="599"/>
    </location>
</feature>
<feature type="compositionally biased region" description="Basic and acidic residues" evidence="6">
    <location>
        <begin position="706"/>
        <end position="715"/>
    </location>
</feature>
<feature type="compositionally biased region" description="Basic and acidic residues" evidence="6">
    <location>
        <begin position="879"/>
        <end position="891"/>
    </location>
</feature>
<feature type="compositionally biased region" description="Basic and acidic residues" evidence="6">
    <location>
        <begin position="1002"/>
        <end position="1012"/>
    </location>
</feature>
<feature type="disulfide bond" evidence="1">
    <location>
        <begin position="39"/>
        <end position="75"/>
    </location>
</feature>
<feature type="disulfide bond" evidence="1">
    <location>
        <begin position="43"/>
        <end position="80"/>
    </location>
</feature>
<feature type="disulfide bond" evidence="1">
    <location>
        <begin position="54"/>
        <end position="65"/>
    </location>
</feature>
<feature type="disulfide bond" evidence="1">
    <location>
        <begin position="425"/>
        <end position="464"/>
    </location>
</feature>
<feature type="disulfide bond" evidence="1">
    <location>
        <begin position="436"/>
        <end position="476"/>
    </location>
</feature>
<feature type="disulfide bond" evidence="1">
    <location>
        <begin position="440"/>
        <end position="481"/>
    </location>
</feature>
<feature type="disulfide bond" evidence="1">
    <location>
        <begin position="750"/>
        <end position="800"/>
    </location>
</feature>
<feature type="disulfide bond" evidence="1">
    <location>
        <begin position="759"/>
        <end position="783"/>
    </location>
</feature>
<feature type="disulfide bond" evidence="1">
    <location>
        <begin position="775"/>
        <end position="796"/>
    </location>
</feature>
<feature type="disulfide bond" evidence="1">
    <location>
        <begin position="926"/>
        <end position="973"/>
    </location>
</feature>
<feature type="disulfide bond" evidence="1">
    <location>
        <begin position="1065"/>
        <end position="1112"/>
    </location>
</feature>
<feature type="disulfide bond" evidence="1">
    <location>
        <begin position="1154"/>
        <end position="1202"/>
    </location>
</feature>
<feature type="sequence conflict" description="In Ref. 1; AAG41980." evidence="7" ref="1">
    <original>V</original>
    <variation>A</variation>
    <location>
        <position position="411"/>
    </location>
</feature>
<feature type="sequence conflict" description="In Ref. 1; AAG41980." evidence="7" ref="1">
    <original>M</original>
    <variation>I</variation>
    <location>
        <position position="560"/>
    </location>
</feature>
<feature type="sequence conflict" description="In Ref. 2; AAH05747." evidence="7" ref="2">
    <original>R</original>
    <variation>K</variation>
    <location>
        <position position="837"/>
    </location>
</feature>
<feature type="sequence conflict" description="In Ref. 2; AAH05747." evidence="7" ref="2">
    <original>E</original>
    <variation>D</variation>
    <location>
        <position position="858"/>
    </location>
</feature>
<feature type="sequence conflict" description="In Ref. 2; AAH05747." evidence="7" ref="2">
    <original>Y</original>
    <variation>H</variation>
    <location>
        <position position="870"/>
    </location>
</feature>
<feature type="sequence conflict" description="In Ref. 2; AAH05747." evidence="7" ref="2">
    <original>V</original>
    <variation>I</variation>
    <location>
        <position position="883"/>
    </location>
</feature>
<feature type="sequence conflict" description="In Ref. 2; AAH05747." evidence="7" ref="2">
    <original>S</original>
    <variation>P</variation>
    <location>
        <position position="932"/>
    </location>
</feature>
<feature type="sequence conflict" description="In Ref. 1; AAG41980 and 2; AAH05747." evidence="7" ref="1 2">
    <original>F</original>
    <variation>L</variation>
    <location>
        <position position="997"/>
    </location>
</feature>
<organism>
    <name type="scientific">Mus musculus</name>
    <name type="common">Mouse</name>
    <dbReference type="NCBI Taxonomy" id="10090"/>
    <lineage>
        <taxon>Eukaryota</taxon>
        <taxon>Metazoa</taxon>
        <taxon>Chordata</taxon>
        <taxon>Craniata</taxon>
        <taxon>Vertebrata</taxon>
        <taxon>Euteleostomi</taxon>
        <taxon>Mammalia</taxon>
        <taxon>Eutheria</taxon>
        <taxon>Euarchontoglires</taxon>
        <taxon>Glires</taxon>
        <taxon>Rodentia</taxon>
        <taxon>Myomorpha</taxon>
        <taxon>Muroidea</taxon>
        <taxon>Muridae</taxon>
        <taxon>Murinae</taxon>
        <taxon>Mus</taxon>
        <taxon>Mus</taxon>
    </lineage>
</organism>
<keyword id="KW-1015">Disulfide bond</keyword>
<keyword id="KW-0393">Immunoglobulin domain</keyword>
<keyword id="KW-0646">Protease inhibitor</keyword>
<keyword id="KW-1185">Reference proteome</keyword>
<keyword id="KW-0677">Repeat</keyword>
<keyword id="KW-0964">Secreted</keyword>
<keyword id="KW-0722">Serine protease inhibitor</keyword>
<keyword id="KW-0732">Signal</keyword>
<gene>
    <name type="primary">Papln</name>
</gene>